<proteinExistence type="inferred from homology"/>
<name>HIS2_BURMS</name>
<organism>
    <name type="scientific">Burkholderia mallei (strain SAVP1)</name>
    <dbReference type="NCBI Taxonomy" id="320388"/>
    <lineage>
        <taxon>Bacteria</taxon>
        <taxon>Pseudomonadati</taxon>
        <taxon>Pseudomonadota</taxon>
        <taxon>Betaproteobacteria</taxon>
        <taxon>Burkholderiales</taxon>
        <taxon>Burkholderiaceae</taxon>
        <taxon>Burkholderia</taxon>
        <taxon>pseudomallei group</taxon>
    </lineage>
</organism>
<keyword id="KW-0028">Amino-acid biosynthesis</keyword>
<keyword id="KW-0067">ATP-binding</keyword>
<keyword id="KW-0963">Cytoplasm</keyword>
<keyword id="KW-0368">Histidine biosynthesis</keyword>
<keyword id="KW-0378">Hydrolase</keyword>
<keyword id="KW-0547">Nucleotide-binding</keyword>
<feature type="chain" id="PRO_1000063329" description="Phosphoribosyl-ATP pyrophosphatase">
    <location>
        <begin position="1"/>
        <end position="122"/>
    </location>
</feature>
<reference key="1">
    <citation type="journal article" date="2010" name="Genome Biol. Evol.">
        <title>Continuing evolution of Burkholderia mallei through genome reduction and large-scale rearrangements.</title>
        <authorList>
            <person name="Losada L."/>
            <person name="Ronning C.M."/>
            <person name="DeShazer D."/>
            <person name="Woods D."/>
            <person name="Fedorova N."/>
            <person name="Kim H.S."/>
            <person name="Shabalina S.A."/>
            <person name="Pearson T.R."/>
            <person name="Brinkac L."/>
            <person name="Tan P."/>
            <person name="Nandi T."/>
            <person name="Crabtree J."/>
            <person name="Badger J."/>
            <person name="Beckstrom-Sternberg S."/>
            <person name="Saqib M."/>
            <person name="Schutzer S.E."/>
            <person name="Keim P."/>
            <person name="Nierman W.C."/>
        </authorList>
    </citation>
    <scope>NUCLEOTIDE SEQUENCE [LARGE SCALE GENOMIC DNA]</scope>
    <source>
        <strain>SAVP1</strain>
    </source>
</reference>
<sequence length="122" mass="13361">MTQSTTEDTLLRLAAVIDSRKGGDPEQSYVSRLFHKGDDAILKKIGEEATEVVLAAKDVRQGGAPSALVGEVADLWFHCLVALSHFDLSPADVIAELERREGMSGIEEKALRKRREREENGG</sequence>
<dbReference type="EC" id="3.6.1.31" evidence="1"/>
<dbReference type="EMBL" id="CP000526">
    <property type="protein sequence ID" value="ABM52693.1"/>
    <property type="molecule type" value="Genomic_DNA"/>
</dbReference>
<dbReference type="RefSeq" id="WP_004202813.1">
    <property type="nucleotide sequence ID" value="NC_008785.1"/>
</dbReference>
<dbReference type="SMR" id="A1V8H7"/>
<dbReference type="KEGG" id="bmv:BMASAVP1_A3247"/>
<dbReference type="HOGENOM" id="CLU_123337_1_2_4"/>
<dbReference type="UniPathway" id="UPA00031">
    <property type="reaction ID" value="UER00007"/>
</dbReference>
<dbReference type="GO" id="GO:0005737">
    <property type="term" value="C:cytoplasm"/>
    <property type="evidence" value="ECO:0007669"/>
    <property type="project" value="UniProtKB-SubCell"/>
</dbReference>
<dbReference type="GO" id="GO:0005524">
    <property type="term" value="F:ATP binding"/>
    <property type="evidence" value="ECO:0007669"/>
    <property type="project" value="UniProtKB-KW"/>
</dbReference>
<dbReference type="GO" id="GO:0004636">
    <property type="term" value="F:phosphoribosyl-ATP diphosphatase activity"/>
    <property type="evidence" value="ECO:0007669"/>
    <property type="project" value="UniProtKB-UniRule"/>
</dbReference>
<dbReference type="GO" id="GO:0000105">
    <property type="term" value="P:L-histidine biosynthetic process"/>
    <property type="evidence" value="ECO:0007669"/>
    <property type="project" value="UniProtKB-UniRule"/>
</dbReference>
<dbReference type="CDD" id="cd11534">
    <property type="entry name" value="NTP-PPase_HisIE_like"/>
    <property type="match status" value="1"/>
</dbReference>
<dbReference type="Gene3D" id="1.10.287.1080">
    <property type="entry name" value="MazG-like"/>
    <property type="match status" value="1"/>
</dbReference>
<dbReference type="HAMAP" id="MF_01020">
    <property type="entry name" value="HisE"/>
    <property type="match status" value="1"/>
</dbReference>
<dbReference type="InterPro" id="IPR008179">
    <property type="entry name" value="HisE"/>
</dbReference>
<dbReference type="InterPro" id="IPR021130">
    <property type="entry name" value="PRib-ATP_PPHydrolase-like"/>
</dbReference>
<dbReference type="NCBIfam" id="TIGR03188">
    <property type="entry name" value="histidine_hisI"/>
    <property type="match status" value="1"/>
</dbReference>
<dbReference type="NCBIfam" id="NF001611">
    <property type="entry name" value="PRK00400.1-3"/>
    <property type="match status" value="1"/>
</dbReference>
<dbReference type="PANTHER" id="PTHR42945">
    <property type="entry name" value="HISTIDINE BIOSYNTHESIS BIFUNCTIONAL PROTEIN"/>
    <property type="match status" value="1"/>
</dbReference>
<dbReference type="PANTHER" id="PTHR42945:SF9">
    <property type="entry name" value="HISTIDINE BIOSYNTHESIS BIFUNCTIONAL PROTEIN HISIE"/>
    <property type="match status" value="1"/>
</dbReference>
<dbReference type="Pfam" id="PF01503">
    <property type="entry name" value="PRA-PH"/>
    <property type="match status" value="1"/>
</dbReference>
<dbReference type="SUPFAM" id="SSF101386">
    <property type="entry name" value="all-alpha NTP pyrophosphatases"/>
    <property type="match status" value="1"/>
</dbReference>
<comment type="catalytic activity">
    <reaction evidence="1">
        <text>1-(5-phospho-beta-D-ribosyl)-ATP + H2O = 1-(5-phospho-beta-D-ribosyl)-5'-AMP + diphosphate + H(+)</text>
        <dbReference type="Rhea" id="RHEA:22828"/>
        <dbReference type="ChEBI" id="CHEBI:15377"/>
        <dbReference type="ChEBI" id="CHEBI:15378"/>
        <dbReference type="ChEBI" id="CHEBI:33019"/>
        <dbReference type="ChEBI" id="CHEBI:59457"/>
        <dbReference type="ChEBI" id="CHEBI:73183"/>
        <dbReference type="EC" id="3.6.1.31"/>
    </reaction>
</comment>
<comment type="pathway">
    <text evidence="1">Amino-acid biosynthesis; L-histidine biosynthesis; L-histidine from 5-phospho-alpha-D-ribose 1-diphosphate: step 2/9.</text>
</comment>
<comment type="subcellular location">
    <subcellularLocation>
        <location evidence="1">Cytoplasm</location>
    </subcellularLocation>
</comment>
<comment type="similarity">
    <text evidence="1">Belongs to the PRA-PH family.</text>
</comment>
<accession>A1V8H7</accession>
<protein>
    <recommendedName>
        <fullName evidence="1">Phosphoribosyl-ATP pyrophosphatase</fullName>
        <shortName evidence="1">PRA-PH</shortName>
        <ecNumber evidence="1">3.6.1.31</ecNumber>
    </recommendedName>
</protein>
<evidence type="ECO:0000255" key="1">
    <source>
        <dbReference type="HAMAP-Rule" id="MF_01020"/>
    </source>
</evidence>
<gene>
    <name evidence="1" type="primary">hisE</name>
    <name type="ordered locus">BMASAVP1_A3247</name>
</gene>